<organism>
    <name type="scientific">Oryza sativa subsp. japonica</name>
    <name type="common">Rice</name>
    <dbReference type="NCBI Taxonomy" id="39947"/>
    <lineage>
        <taxon>Eukaryota</taxon>
        <taxon>Viridiplantae</taxon>
        <taxon>Streptophyta</taxon>
        <taxon>Embryophyta</taxon>
        <taxon>Tracheophyta</taxon>
        <taxon>Spermatophyta</taxon>
        <taxon>Magnoliopsida</taxon>
        <taxon>Liliopsida</taxon>
        <taxon>Poales</taxon>
        <taxon>Poaceae</taxon>
        <taxon>BOP clade</taxon>
        <taxon>Oryzoideae</taxon>
        <taxon>Oryzeae</taxon>
        <taxon>Oryzinae</taxon>
        <taxon>Oryza</taxon>
        <taxon>Oryza sativa</taxon>
    </lineage>
</organism>
<comment type="function">
    <text evidence="1 3">This enzyme is required for electron transfer from NADP to cytochrome P450 in microsomes (By similarity) (PubMed:23053415). It can also provide electron transfer to heme oxygenase and cytochrome B5 (By similarity).</text>
</comment>
<comment type="catalytic activity">
    <reaction evidence="1 3">
        <text>2 oxidized [cytochrome P450] + NADPH = 2 reduced [cytochrome P450] + NADP(+) + H(+)</text>
        <dbReference type="Rhea" id="RHEA:24040"/>
        <dbReference type="Rhea" id="RHEA-COMP:14627"/>
        <dbReference type="Rhea" id="RHEA-COMP:14628"/>
        <dbReference type="ChEBI" id="CHEBI:15378"/>
        <dbReference type="ChEBI" id="CHEBI:55376"/>
        <dbReference type="ChEBI" id="CHEBI:57783"/>
        <dbReference type="ChEBI" id="CHEBI:58349"/>
        <dbReference type="ChEBI" id="CHEBI:60344"/>
        <dbReference type="EC" id="1.6.2.4"/>
    </reaction>
    <physiologicalReaction direction="left-to-right" evidence="3">
        <dbReference type="Rhea" id="RHEA:24041"/>
    </physiologicalReaction>
</comment>
<comment type="cofactor">
    <cofactor evidence="1">
        <name>FAD</name>
        <dbReference type="ChEBI" id="CHEBI:57692"/>
    </cofactor>
    <text evidence="1">Binds 1 FAD per monomer.</text>
</comment>
<comment type="cofactor">
    <cofactor evidence="1">
        <name>FMN</name>
        <dbReference type="ChEBI" id="CHEBI:58210"/>
    </cofactor>
    <text evidence="1">Binds 1 FMN per monomer.</text>
</comment>
<comment type="subcellular location">
    <subcellularLocation>
        <location evidence="1 3">Endoplasmic reticulum membrane</location>
        <topology evidence="1">Single-pass membrane protein</topology>
        <orientation evidence="1">Cytoplasmic side</orientation>
    </subcellularLocation>
</comment>
<comment type="similarity">
    <text evidence="1">Belongs to the NADPH--cytochrome P450 reductase family.</text>
</comment>
<comment type="similarity">
    <text evidence="1">In the C-terminal section; belongs to the flavoprotein pyridine nucleotide cytochrome reductase family.</text>
</comment>
<comment type="similarity">
    <text evidence="1">In the N-terminal section; belongs to the flavodoxin family.</text>
</comment>
<keyword id="KW-0256">Endoplasmic reticulum</keyword>
<keyword id="KW-0274">FAD</keyword>
<keyword id="KW-0285">Flavoprotein</keyword>
<keyword id="KW-0288">FMN</keyword>
<keyword id="KW-0472">Membrane</keyword>
<keyword id="KW-0521">NADP</keyword>
<keyword id="KW-0560">Oxidoreductase</keyword>
<keyword id="KW-1185">Reference proteome</keyword>
<keyword id="KW-0812">Transmembrane</keyword>
<keyword id="KW-1133">Transmembrane helix</keyword>
<dbReference type="EC" id="1.6.2.4" evidence="1 3"/>
<dbReference type="EMBL" id="AP005090">
    <property type="protein sequence ID" value="BAD45947.1"/>
    <property type="molecule type" value="Genomic_DNA"/>
</dbReference>
<dbReference type="EMBL" id="AP008215">
    <property type="protein sequence ID" value="BAF25828.1"/>
    <property type="molecule type" value="Genomic_DNA"/>
</dbReference>
<dbReference type="EMBL" id="AP014965">
    <property type="protein sequence ID" value="BAT09381.1"/>
    <property type="molecule type" value="Genomic_DNA"/>
</dbReference>
<dbReference type="SMR" id="Q653S9"/>
<dbReference type="FunCoup" id="Q653S9">
    <property type="interactions" value="3346"/>
</dbReference>
<dbReference type="STRING" id="39947.Q653S9"/>
<dbReference type="PaxDb" id="39947-Q653S9"/>
<dbReference type="EnsemblPlants" id="Os09t0558900-01">
    <property type="protein sequence ID" value="Os09t0558900-01"/>
    <property type="gene ID" value="Os09g0558900"/>
</dbReference>
<dbReference type="GeneID" id="4347838"/>
<dbReference type="Gramene" id="Os09t0558900-01">
    <property type="protein sequence ID" value="Os09t0558900-01"/>
    <property type="gene ID" value="Os09g0558900"/>
</dbReference>
<dbReference type="KEGG" id="dosa:Os09g0558900"/>
<dbReference type="KEGG" id="osa:4347838"/>
<dbReference type="eggNOG" id="KOG1158">
    <property type="taxonomic scope" value="Eukaryota"/>
</dbReference>
<dbReference type="HOGENOM" id="CLU_001570_17_3_1"/>
<dbReference type="InParanoid" id="Q653S9"/>
<dbReference type="OMA" id="MTPTRIH"/>
<dbReference type="OrthoDB" id="1856718at2759"/>
<dbReference type="Proteomes" id="UP000000763">
    <property type="component" value="Chromosome 9"/>
</dbReference>
<dbReference type="Proteomes" id="UP000059680">
    <property type="component" value="Chromosome 9"/>
</dbReference>
<dbReference type="GO" id="GO:0005829">
    <property type="term" value="C:cytosol"/>
    <property type="evidence" value="ECO:0000318"/>
    <property type="project" value="GO_Central"/>
</dbReference>
<dbReference type="GO" id="GO:0005789">
    <property type="term" value="C:endoplasmic reticulum membrane"/>
    <property type="evidence" value="ECO:0000314"/>
    <property type="project" value="UniProtKB"/>
</dbReference>
<dbReference type="GO" id="GO:0050660">
    <property type="term" value="F:flavin adenine dinucleotide binding"/>
    <property type="evidence" value="ECO:0000318"/>
    <property type="project" value="GO_Central"/>
</dbReference>
<dbReference type="GO" id="GO:0010181">
    <property type="term" value="F:FMN binding"/>
    <property type="evidence" value="ECO:0000318"/>
    <property type="project" value="GO_Central"/>
</dbReference>
<dbReference type="GO" id="GO:0050661">
    <property type="term" value="F:NADP binding"/>
    <property type="evidence" value="ECO:0007669"/>
    <property type="project" value="UniProtKB-UniRule"/>
</dbReference>
<dbReference type="GO" id="GO:0003958">
    <property type="term" value="F:NADPH-hemoprotein reductase activity"/>
    <property type="evidence" value="ECO:0000314"/>
    <property type="project" value="UniProtKB"/>
</dbReference>
<dbReference type="CDD" id="cd06204">
    <property type="entry name" value="CYPOR"/>
    <property type="match status" value="1"/>
</dbReference>
<dbReference type="FunFam" id="1.20.990.10:FF:000003">
    <property type="entry name" value="NADPH--cytochrome P450 reductase"/>
    <property type="match status" value="1"/>
</dbReference>
<dbReference type="FunFam" id="3.40.50.360:FF:000023">
    <property type="entry name" value="NADPH--cytochrome P450 reductase"/>
    <property type="match status" value="1"/>
</dbReference>
<dbReference type="FunFam" id="3.40.50.80:FF:000001">
    <property type="entry name" value="NADPH--cytochrome P450 reductase 1"/>
    <property type="match status" value="1"/>
</dbReference>
<dbReference type="Gene3D" id="3.40.50.360">
    <property type="match status" value="1"/>
</dbReference>
<dbReference type="Gene3D" id="1.20.990.10">
    <property type="entry name" value="NADPH-cytochrome p450 Reductase, Chain A, domain 3"/>
    <property type="match status" value="1"/>
</dbReference>
<dbReference type="Gene3D" id="3.40.50.80">
    <property type="entry name" value="Nucleotide-binding domain of ferredoxin-NADP reductase (FNR) module"/>
    <property type="match status" value="1"/>
</dbReference>
<dbReference type="Gene3D" id="2.40.30.10">
    <property type="entry name" value="Translation factors"/>
    <property type="match status" value="1"/>
</dbReference>
<dbReference type="HAMAP" id="MF_03212">
    <property type="entry name" value="NCPR"/>
    <property type="match status" value="1"/>
</dbReference>
<dbReference type="InterPro" id="IPR003097">
    <property type="entry name" value="CysJ-like_FAD-binding"/>
</dbReference>
<dbReference type="InterPro" id="IPR017927">
    <property type="entry name" value="FAD-bd_FR_type"/>
</dbReference>
<dbReference type="InterPro" id="IPR001094">
    <property type="entry name" value="Flavdoxin-like"/>
</dbReference>
<dbReference type="InterPro" id="IPR008254">
    <property type="entry name" value="Flavodoxin/NO_synth"/>
</dbReference>
<dbReference type="InterPro" id="IPR001709">
    <property type="entry name" value="Flavoprot_Pyr_Nucl_cyt_Rdtase"/>
</dbReference>
<dbReference type="InterPro" id="IPR029039">
    <property type="entry name" value="Flavoprotein-like_sf"/>
</dbReference>
<dbReference type="InterPro" id="IPR039261">
    <property type="entry name" value="FNR_nucleotide-bd"/>
</dbReference>
<dbReference type="InterPro" id="IPR023173">
    <property type="entry name" value="NADPH_Cyt_P450_Rdtase_alpha"/>
</dbReference>
<dbReference type="InterPro" id="IPR001433">
    <property type="entry name" value="OxRdtase_FAD/NAD-bd"/>
</dbReference>
<dbReference type="InterPro" id="IPR023208">
    <property type="entry name" value="P450R"/>
</dbReference>
<dbReference type="InterPro" id="IPR017938">
    <property type="entry name" value="Riboflavin_synthase-like_b-brl"/>
</dbReference>
<dbReference type="PANTHER" id="PTHR19384:SF17">
    <property type="entry name" value="NADPH--CYTOCHROME P450 REDUCTASE"/>
    <property type="match status" value="1"/>
</dbReference>
<dbReference type="PANTHER" id="PTHR19384">
    <property type="entry name" value="NITRIC OXIDE SYNTHASE-RELATED"/>
    <property type="match status" value="1"/>
</dbReference>
<dbReference type="Pfam" id="PF00667">
    <property type="entry name" value="FAD_binding_1"/>
    <property type="match status" value="1"/>
</dbReference>
<dbReference type="Pfam" id="PF00258">
    <property type="entry name" value="Flavodoxin_1"/>
    <property type="match status" value="1"/>
</dbReference>
<dbReference type="Pfam" id="PF00175">
    <property type="entry name" value="NAD_binding_1"/>
    <property type="match status" value="1"/>
</dbReference>
<dbReference type="PIRSF" id="PIRSF000208">
    <property type="entry name" value="P450R"/>
    <property type="match status" value="1"/>
</dbReference>
<dbReference type="PRINTS" id="PR00369">
    <property type="entry name" value="FLAVODOXIN"/>
</dbReference>
<dbReference type="PRINTS" id="PR00371">
    <property type="entry name" value="FPNCR"/>
</dbReference>
<dbReference type="SUPFAM" id="SSF52343">
    <property type="entry name" value="Ferredoxin reductase-like, C-terminal NADP-linked domain"/>
    <property type="match status" value="1"/>
</dbReference>
<dbReference type="SUPFAM" id="SSF52218">
    <property type="entry name" value="Flavoproteins"/>
    <property type="match status" value="1"/>
</dbReference>
<dbReference type="SUPFAM" id="SSF63380">
    <property type="entry name" value="Riboflavin synthase domain-like"/>
    <property type="match status" value="1"/>
</dbReference>
<dbReference type="PROSITE" id="PS51384">
    <property type="entry name" value="FAD_FR"/>
    <property type="match status" value="1"/>
</dbReference>
<dbReference type="PROSITE" id="PS50902">
    <property type="entry name" value="FLAVODOXIN_LIKE"/>
    <property type="match status" value="1"/>
</dbReference>
<reference key="1">
    <citation type="journal article" date="2005" name="Nature">
        <title>The map-based sequence of the rice genome.</title>
        <authorList>
            <consortium name="International rice genome sequencing project (IRGSP)"/>
        </authorList>
    </citation>
    <scope>NUCLEOTIDE SEQUENCE [LARGE SCALE GENOMIC DNA]</scope>
    <source>
        <strain>cv. Nipponbare</strain>
    </source>
</reference>
<reference key="2">
    <citation type="journal article" date="2008" name="Nucleic Acids Res.">
        <title>The rice annotation project database (RAP-DB): 2008 update.</title>
        <authorList>
            <consortium name="The rice annotation project (RAP)"/>
        </authorList>
    </citation>
    <scope>GENOME REANNOTATION</scope>
    <source>
        <strain>cv. Nipponbare</strain>
    </source>
</reference>
<reference key="3">
    <citation type="journal article" date="2013" name="Rice">
        <title>Improvement of the Oryza sativa Nipponbare reference genome using next generation sequence and optical map data.</title>
        <authorList>
            <person name="Kawahara Y."/>
            <person name="de la Bastide M."/>
            <person name="Hamilton J.P."/>
            <person name="Kanamori H."/>
            <person name="McCombie W.R."/>
            <person name="Ouyang S."/>
            <person name="Schwartz D.C."/>
            <person name="Tanaka T."/>
            <person name="Wu J."/>
            <person name="Zhou S."/>
            <person name="Childs K.L."/>
            <person name="Davidson R.M."/>
            <person name="Lin H."/>
            <person name="Quesada-Ocampo L."/>
            <person name="Vaillancourt B."/>
            <person name="Sakai H."/>
            <person name="Lee S.S."/>
            <person name="Kim J."/>
            <person name="Numa H."/>
            <person name="Itoh T."/>
            <person name="Buell C.R."/>
            <person name="Matsumoto T."/>
        </authorList>
    </citation>
    <scope>GENOME REANNOTATION</scope>
    <source>
        <strain>cv. Nipponbare</strain>
    </source>
</reference>
<reference key="4">
    <citation type="journal article" date="2003" name="Science">
        <title>Collection, mapping, and annotation of over 28,000 cDNA clones from japonica rice.</title>
        <authorList>
            <consortium name="The rice full-length cDNA consortium"/>
        </authorList>
    </citation>
    <scope>NUCLEOTIDE SEQUENCE [LARGE SCALE MRNA]</scope>
    <source>
        <strain>cv. Nipponbare</strain>
    </source>
</reference>
<reference key="5">
    <citation type="journal article" date="2013" name="Bioprocess Biosyst. Eng.">
        <title>Rice P450 reductases differentially affect P450-mediated metabolism in bacterial expression systems.</title>
        <authorList>
            <person name="Park S."/>
            <person name="Kim Y.S."/>
            <person name="Rupasinghe S.G."/>
            <person name="Schuler M.A."/>
            <person name="Back K."/>
        </authorList>
    </citation>
    <scope>FUNCTION</scope>
    <scope>CATALYTIC ACTIVITY</scope>
    <scope>SUBCELLULAR LOCATION</scope>
</reference>
<accession>Q653S9</accession>
<accession>A0A0P0XRI2</accession>
<proteinExistence type="evidence at protein level"/>
<evidence type="ECO:0000255" key="1">
    <source>
        <dbReference type="HAMAP-Rule" id="MF_03212"/>
    </source>
</evidence>
<evidence type="ECO:0000256" key="2">
    <source>
        <dbReference type="SAM" id="MobiDB-lite"/>
    </source>
</evidence>
<evidence type="ECO:0000269" key="3">
    <source>
    </source>
</evidence>
<evidence type="ECO:0000303" key="4">
    <source>
    </source>
</evidence>
<evidence type="ECO:0000305" key="5"/>
<evidence type="ECO:0000312" key="6">
    <source>
        <dbReference type="EMBL" id="BAD45947.1"/>
    </source>
</evidence>
<evidence type="ECO:0000312" key="7">
    <source>
        <dbReference type="EMBL" id="BAT09381.1"/>
    </source>
</evidence>
<name>NCPR3_ORYSJ</name>
<sequence>MDSGGGGGGGALRPSALDLVAALLTGRGRPEEEGWPPSLAENRHLIVLLTTSLAVLVGCGVALLVRRSSISAPAVRAQEPQPRAPAPAKRKQEAEPDPDDGRQRVAVFFGTQTGTAEGFAKALAEEAKSRYDKAVFKVLDLDEYAADDEEYEQKLKKEIIALFFVATYGDGEPTDNAARFYKWFGEGNERGEWLSNLRFGVFGLGNRQYEHFNKVGKVVDQLLAEQGGKRIVPLGLGDDDQCIEDDFNAWKELLWPELDKLLRVEDDKSAAPTPYTAAIPEYRVVLVKPEEAMHINKSFSLSNGHAVYDIQHPCRANVAVRRELHTPASYRSCIHLEFDISGTGLTYETGDHVGVYAENCTETVEEVENLLGYSPDTLFSIHADQEDGTPLFGGSLPPPFPSPCTVGTALARYADLLSFPKKSALIALASHASDPKDAERLRHLASPAGKKEYSQWIVSSQRSLLEVMTEFPSAKPPLGVFFAAIAPRLQPRYYSISSSPRMTPTRIHVTCALVYGQTPTGRIHKGVCSTWMKNSIPLEESQECSWAPIFVRQSNFKLPTDPTVPIIMIGPGTGLAPFRGFLQERLALKETGVELGHAVLFFGCRNRKMDFIYEDELNNFVETGALSELIVAFSREGPSKEYVQHKMAEKAPEIWSIISQGGYIYVCGDAKGMARDVHRTLHTIVQEQGSLDNSNTESYVKSLQMEGRYLRDVW</sequence>
<feature type="chain" id="PRO_0000451430" description="NADPH--cytochrome P450 reductase 3">
    <location>
        <begin position="1"/>
        <end position="714"/>
    </location>
</feature>
<feature type="topological domain" description="Lumenal" evidence="1">
    <location>
        <begin position="1"/>
        <end position="44"/>
    </location>
</feature>
<feature type="transmembrane region" description="Helical" evidence="1">
    <location>
        <begin position="45"/>
        <end position="65"/>
    </location>
</feature>
<feature type="topological domain" description="Cytoplasmic" evidence="1">
    <location>
        <begin position="66"/>
        <end position="714"/>
    </location>
</feature>
<feature type="domain" description="Flavodoxin-like" evidence="1">
    <location>
        <begin position="105"/>
        <end position="255"/>
    </location>
</feature>
<feature type="domain" description="FAD-binding FR-type" evidence="1">
    <location>
        <begin position="311"/>
        <end position="559"/>
    </location>
</feature>
<feature type="region of interest" description="Disordered" evidence="2">
    <location>
        <begin position="74"/>
        <end position="103"/>
    </location>
</feature>
<feature type="compositionally biased region" description="Basic and acidic residues" evidence="2">
    <location>
        <begin position="90"/>
        <end position="103"/>
    </location>
</feature>
<feature type="binding site" evidence="1">
    <location>
        <begin position="111"/>
        <end position="116"/>
    </location>
    <ligand>
        <name>FMN</name>
        <dbReference type="ChEBI" id="CHEBI:58210"/>
    </ligand>
</feature>
<feature type="binding site" evidence="1">
    <location>
        <begin position="166"/>
        <end position="169"/>
    </location>
    <ligand>
        <name>FMN</name>
        <dbReference type="ChEBI" id="CHEBI:58210"/>
    </ligand>
</feature>
<feature type="binding site" evidence="1">
    <location>
        <begin position="204"/>
        <end position="213"/>
    </location>
    <ligand>
        <name>FMN</name>
        <dbReference type="ChEBI" id="CHEBI:58210"/>
    </ligand>
</feature>
<feature type="binding site" evidence="1">
    <location>
        <position position="239"/>
    </location>
    <ligand>
        <name>FMN</name>
        <dbReference type="ChEBI" id="CHEBI:58210"/>
    </ligand>
</feature>
<feature type="binding site" evidence="1">
    <location>
        <position position="331"/>
    </location>
    <ligand>
        <name>NADP(+)</name>
        <dbReference type="ChEBI" id="CHEBI:58349"/>
    </ligand>
</feature>
<feature type="binding site" evidence="1">
    <location>
        <begin position="492"/>
        <end position="495"/>
    </location>
    <ligand>
        <name>FAD</name>
        <dbReference type="ChEBI" id="CHEBI:57692"/>
    </ligand>
</feature>
<feature type="binding site" evidence="1">
    <location>
        <begin position="510"/>
        <end position="512"/>
    </location>
    <ligand>
        <name>FAD</name>
        <dbReference type="ChEBI" id="CHEBI:57692"/>
    </ligand>
</feature>
<feature type="binding site" evidence="1">
    <location>
        <begin position="526"/>
        <end position="529"/>
    </location>
    <ligand>
        <name>FAD</name>
        <dbReference type="ChEBI" id="CHEBI:57692"/>
    </ligand>
</feature>
<feature type="binding site" evidence="1">
    <location>
        <position position="573"/>
    </location>
    <ligand>
        <name>NADP(+)</name>
        <dbReference type="ChEBI" id="CHEBI:58349"/>
    </ligand>
</feature>
<feature type="binding site" evidence="1">
    <location>
        <begin position="634"/>
        <end position="635"/>
    </location>
    <ligand>
        <name>NADP(+)</name>
        <dbReference type="ChEBI" id="CHEBI:58349"/>
    </ligand>
</feature>
<feature type="binding site" evidence="1">
    <location>
        <begin position="640"/>
        <end position="644"/>
    </location>
    <ligand>
        <name>NADP(+)</name>
        <dbReference type="ChEBI" id="CHEBI:58349"/>
    </ligand>
</feature>
<feature type="binding site" evidence="1">
    <location>
        <position position="676"/>
    </location>
    <ligand>
        <name>NADP(+)</name>
        <dbReference type="ChEBI" id="CHEBI:58349"/>
    </ligand>
</feature>
<feature type="binding site" evidence="1">
    <location>
        <position position="714"/>
    </location>
    <ligand>
        <name>FAD</name>
        <dbReference type="ChEBI" id="CHEBI:57692"/>
    </ligand>
</feature>
<gene>
    <name evidence="4" type="primary">CPR3</name>
    <name evidence="7" type="ordered locus">Os09g0558900</name>
    <name evidence="5" type="ordered locus">LOC_Os09g38620</name>
    <name evidence="6" type="ORF">OJ1065_E04.12</name>
</gene>
<protein>
    <recommendedName>
        <fullName evidence="1 4">NADPH--cytochrome P450 reductase 3</fullName>
        <shortName evidence="1">CPR</shortName>
        <shortName evidence="1">P450R</shortName>
        <ecNumber evidence="1 3">1.6.2.4</ecNumber>
    </recommendedName>
</protein>